<keyword id="KW-0067">ATP-binding</keyword>
<keyword id="KW-0963">Cytoplasm</keyword>
<keyword id="KW-0418">Kinase</keyword>
<keyword id="KW-0460">Magnesium</keyword>
<keyword id="KW-0479">Metal-binding</keyword>
<keyword id="KW-0547">Nucleotide-binding</keyword>
<keyword id="KW-0808">Transferase</keyword>
<feature type="chain" id="PRO_0000107529" description="Acetate kinase">
    <location>
        <begin position="1"/>
        <end position="398"/>
    </location>
</feature>
<feature type="active site" description="Proton donor/acceptor" evidence="1">
    <location>
        <position position="148"/>
    </location>
</feature>
<feature type="binding site" evidence="1">
    <location>
        <position position="7"/>
    </location>
    <ligand>
        <name>Mg(2+)</name>
        <dbReference type="ChEBI" id="CHEBI:18420"/>
    </ligand>
</feature>
<feature type="binding site" evidence="1">
    <location>
        <position position="14"/>
    </location>
    <ligand>
        <name>ATP</name>
        <dbReference type="ChEBI" id="CHEBI:30616"/>
    </ligand>
</feature>
<feature type="binding site" evidence="1">
    <location>
        <position position="91"/>
    </location>
    <ligand>
        <name>substrate</name>
    </ligand>
</feature>
<feature type="binding site" evidence="1">
    <location>
        <begin position="208"/>
        <end position="212"/>
    </location>
    <ligand>
        <name>ATP</name>
        <dbReference type="ChEBI" id="CHEBI:30616"/>
    </ligand>
</feature>
<feature type="binding site" evidence="1">
    <location>
        <begin position="283"/>
        <end position="285"/>
    </location>
    <ligand>
        <name>ATP</name>
        <dbReference type="ChEBI" id="CHEBI:30616"/>
    </ligand>
</feature>
<feature type="binding site" evidence="1">
    <location>
        <begin position="331"/>
        <end position="335"/>
    </location>
    <ligand>
        <name>ATP</name>
        <dbReference type="ChEBI" id="CHEBI:30616"/>
    </ligand>
</feature>
<feature type="binding site" evidence="1">
    <location>
        <position position="384"/>
    </location>
    <ligand>
        <name>Mg(2+)</name>
        <dbReference type="ChEBI" id="CHEBI:18420"/>
    </ligand>
</feature>
<feature type="site" description="Transition state stabilizer" evidence="1">
    <location>
        <position position="180"/>
    </location>
</feature>
<feature type="site" description="Transition state stabilizer" evidence="1">
    <location>
        <position position="241"/>
    </location>
</feature>
<accession>Q64Z48</accession>
<proteinExistence type="inferred from homology"/>
<evidence type="ECO:0000255" key="1">
    <source>
        <dbReference type="HAMAP-Rule" id="MF_00020"/>
    </source>
</evidence>
<comment type="function">
    <text evidence="1">Catalyzes the formation of acetyl phosphate from acetate and ATP. Can also catalyze the reverse reaction.</text>
</comment>
<comment type="catalytic activity">
    <reaction evidence="1">
        <text>acetate + ATP = acetyl phosphate + ADP</text>
        <dbReference type="Rhea" id="RHEA:11352"/>
        <dbReference type="ChEBI" id="CHEBI:22191"/>
        <dbReference type="ChEBI" id="CHEBI:30089"/>
        <dbReference type="ChEBI" id="CHEBI:30616"/>
        <dbReference type="ChEBI" id="CHEBI:456216"/>
        <dbReference type="EC" id="2.7.2.1"/>
    </reaction>
</comment>
<comment type="cofactor">
    <cofactor evidence="1">
        <name>Mg(2+)</name>
        <dbReference type="ChEBI" id="CHEBI:18420"/>
    </cofactor>
    <cofactor evidence="1">
        <name>Mn(2+)</name>
        <dbReference type="ChEBI" id="CHEBI:29035"/>
    </cofactor>
    <text evidence="1">Mg(2+). Can also accept Mn(2+).</text>
</comment>
<comment type="pathway">
    <text evidence="1">Metabolic intermediate biosynthesis; acetyl-CoA biosynthesis; acetyl-CoA from acetate: step 1/2.</text>
</comment>
<comment type="subunit">
    <text evidence="1">Homodimer.</text>
</comment>
<comment type="subcellular location">
    <subcellularLocation>
        <location evidence="1">Cytoplasm</location>
    </subcellularLocation>
</comment>
<comment type="similarity">
    <text evidence="1">Belongs to the acetokinase family.</text>
</comment>
<dbReference type="EC" id="2.7.2.1" evidence="1"/>
<dbReference type="EMBL" id="AP006841">
    <property type="protein sequence ID" value="BAD47228.1"/>
    <property type="molecule type" value="Genomic_DNA"/>
</dbReference>
<dbReference type="RefSeq" id="WP_005784326.1">
    <property type="nucleotide sequence ID" value="NZ_UYXF01000019.1"/>
</dbReference>
<dbReference type="RefSeq" id="YP_097762.1">
    <property type="nucleotide sequence ID" value="NC_006347.1"/>
</dbReference>
<dbReference type="SMR" id="Q64Z48"/>
<dbReference type="STRING" id="295405.BF0479"/>
<dbReference type="KEGG" id="bfr:BF0479"/>
<dbReference type="PATRIC" id="fig|295405.11.peg.495"/>
<dbReference type="HOGENOM" id="CLU_020352_0_1_10"/>
<dbReference type="OrthoDB" id="9802453at2"/>
<dbReference type="UniPathway" id="UPA00340">
    <property type="reaction ID" value="UER00458"/>
</dbReference>
<dbReference type="Proteomes" id="UP000002197">
    <property type="component" value="Chromosome"/>
</dbReference>
<dbReference type="GO" id="GO:0005737">
    <property type="term" value="C:cytoplasm"/>
    <property type="evidence" value="ECO:0007669"/>
    <property type="project" value="UniProtKB-SubCell"/>
</dbReference>
<dbReference type="GO" id="GO:0008776">
    <property type="term" value="F:acetate kinase activity"/>
    <property type="evidence" value="ECO:0007669"/>
    <property type="project" value="UniProtKB-UniRule"/>
</dbReference>
<dbReference type="GO" id="GO:0005524">
    <property type="term" value="F:ATP binding"/>
    <property type="evidence" value="ECO:0007669"/>
    <property type="project" value="UniProtKB-KW"/>
</dbReference>
<dbReference type="GO" id="GO:0000287">
    <property type="term" value="F:magnesium ion binding"/>
    <property type="evidence" value="ECO:0007669"/>
    <property type="project" value="UniProtKB-UniRule"/>
</dbReference>
<dbReference type="GO" id="GO:0006083">
    <property type="term" value="P:acetate metabolic process"/>
    <property type="evidence" value="ECO:0007669"/>
    <property type="project" value="TreeGrafter"/>
</dbReference>
<dbReference type="GO" id="GO:0006085">
    <property type="term" value="P:acetyl-CoA biosynthetic process"/>
    <property type="evidence" value="ECO:0007669"/>
    <property type="project" value="UniProtKB-UniRule"/>
</dbReference>
<dbReference type="CDD" id="cd24010">
    <property type="entry name" value="ASKHA_NBD_AcK_PK"/>
    <property type="match status" value="1"/>
</dbReference>
<dbReference type="Gene3D" id="3.30.420.40">
    <property type="match status" value="2"/>
</dbReference>
<dbReference type="HAMAP" id="MF_00020">
    <property type="entry name" value="Acetate_kinase"/>
    <property type="match status" value="1"/>
</dbReference>
<dbReference type="InterPro" id="IPR004372">
    <property type="entry name" value="Ac/propionate_kinase"/>
</dbReference>
<dbReference type="InterPro" id="IPR000890">
    <property type="entry name" value="Aliphatic_acid_kin_short-chain"/>
</dbReference>
<dbReference type="InterPro" id="IPR023865">
    <property type="entry name" value="Aliphatic_acid_kinase_CS"/>
</dbReference>
<dbReference type="InterPro" id="IPR043129">
    <property type="entry name" value="ATPase_NBD"/>
</dbReference>
<dbReference type="NCBIfam" id="TIGR00016">
    <property type="entry name" value="ackA"/>
    <property type="match status" value="1"/>
</dbReference>
<dbReference type="PANTHER" id="PTHR21060">
    <property type="entry name" value="ACETATE KINASE"/>
    <property type="match status" value="1"/>
</dbReference>
<dbReference type="PANTHER" id="PTHR21060:SF15">
    <property type="entry name" value="ACETATE KINASE-RELATED"/>
    <property type="match status" value="1"/>
</dbReference>
<dbReference type="Pfam" id="PF00871">
    <property type="entry name" value="Acetate_kinase"/>
    <property type="match status" value="1"/>
</dbReference>
<dbReference type="PIRSF" id="PIRSF000722">
    <property type="entry name" value="Acetate_prop_kin"/>
    <property type="match status" value="1"/>
</dbReference>
<dbReference type="PRINTS" id="PR00471">
    <property type="entry name" value="ACETATEKNASE"/>
</dbReference>
<dbReference type="SUPFAM" id="SSF53067">
    <property type="entry name" value="Actin-like ATPase domain"/>
    <property type="match status" value="2"/>
</dbReference>
<dbReference type="PROSITE" id="PS01075">
    <property type="entry name" value="ACETATE_KINASE_1"/>
    <property type="match status" value="1"/>
</dbReference>
<dbReference type="PROSITE" id="PS01076">
    <property type="entry name" value="ACETATE_KINASE_2"/>
    <property type="match status" value="1"/>
</dbReference>
<gene>
    <name evidence="1" type="primary">ackA</name>
    <name type="ordered locus">BF0479</name>
</gene>
<sequence>MKVLVLNCGSSSIKYKLFDMDSKEVIAQGGIEKIGLKDSFLKLTLPNGEKKILEKDIPEHTVGVEFILNTLVSPEYGAIQSLEEINAVGHRMVHGGERFSKSVLLTKEVLEAFAACNDLAPLHNPANLKGVDAITAILPNVPQIGVFDTAFHQTMPEHAYLYAIPYELYKKYGVRRYGFHGTSHRYVSQRVCEYLGIKPEGLKLITCHIGNGGSIAAIKDGKCIDTSMGLTPLEGLMMGTRSGDIDAGAVTFIMDKEGLTTTGISNLLNKKSGVAGMMNGSSDMRDLEAAVAKGDPQAILTEQMYFYRIKKYIGAYAAALGGVDVILFTGGVGENQATCRAGVCEGLEFLGVKLDPEKNKVRGEEAIISTDDSRVKVVVIPTDEELLIASDTMAILDK</sequence>
<name>ACKA_BACFR</name>
<protein>
    <recommendedName>
        <fullName evidence="1">Acetate kinase</fullName>
        <ecNumber evidence="1">2.7.2.1</ecNumber>
    </recommendedName>
    <alternativeName>
        <fullName evidence="1">Acetokinase</fullName>
    </alternativeName>
</protein>
<reference key="1">
    <citation type="journal article" date="2004" name="Proc. Natl. Acad. Sci. U.S.A.">
        <title>Genomic analysis of Bacteroides fragilis reveals extensive DNA inversions regulating cell surface adaptation.</title>
        <authorList>
            <person name="Kuwahara T."/>
            <person name="Yamashita A."/>
            <person name="Hirakawa H."/>
            <person name="Nakayama H."/>
            <person name="Toh H."/>
            <person name="Okada N."/>
            <person name="Kuhara S."/>
            <person name="Hattori M."/>
            <person name="Hayashi T."/>
            <person name="Ohnishi Y."/>
        </authorList>
    </citation>
    <scope>NUCLEOTIDE SEQUENCE [LARGE SCALE GENOMIC DNA]</scope>
    <source>
        <strain>YCH46</strain>
    </source>
</reference>
<organism>
    <name type="scientific">Bacteroides fragilis (strain YCH46)</name>
    <dbReference type="NCBI Taxonomy" id="295405"/>
    <lineage>
        <taxon>Bacteria</taxon>
        <taxon>Pseudomonadati</taxon>
        <taxon>Bacteroidota</taxon>
        <taxon>Bacteroidia</taxon>
        <taxon>Bacteroidales</taxon>
        <taxon>Bacteroidaceae</taxon>
        <taxon>Bacteroides</taxon>
    </lineage>
</organism>